<comment type="function">
    <text evidence="2">Histone methyltransferase that specifically trimethylates 'Lys-9' of histone H3. H3 'Lys-9' trimethylation represents a specific tag for epigenetic transcriptional repression by recruiting HP1 (CBX1, CBX3 and/or CBX5) proteins to methylated histones. Mainly functions in euchromatin regions, thereby playing a central role in the silencing of euchromatic genes. H3 'Lys-9' trimethylation is coordinated with DNA methylation. Plays a role in promoter hypermethylation and transcriptional silencing of tumor suppressor genes (TSGs) or other tumor-related genes. Also required to maintain a transcriptionally repressive state of genes in undifferentiated embryonic stem cells (ESCs). Associates at promoter regions of tumor suppressor genes (TSGs) leading to their gene silencing (By similarity).</text>
</comment>
<comment type="catalytic activity">
    <reaction evidence="2 7">
        <text>L-lysyl(4)-[histone H3] + 3 S-adenosyl-L-methionine = N(6),N(6),N(6)-trimethyl-L-lysyl(4)-[histone H3] + 3 S-adenosyl-L-homocysteine + 3 H(+)</text>
        <dbReference type="Rhea" id="RHEA:60260"/>
        <dbReference type="Rhea" id="RHEA-COMP:15537"/>
        <dbReference type="Rhea" id="RHEA-COMP:15547"/>
        <dbReference type="ChEBI" id="CHEBI:15378"/>
        <dbReference type="ChEBI" id="CHEBI:29969"/>
        <dbReference type="ChEBI" id="CHEBI:57856"/>
        <dbReference type="ChEBI" id="CHEBI:59789"/>
        <dbReference type="ChEBI" id="CHEBI:61961"/>
        <dbReference type="EC" id="2.1.1.354"/>
    </reaction>
</comment>
<comment type="subcellular location">
    <subcellularLocation>
        <location evidence="1">Nucleus</location>
    </subcellularLocation>
    <subcellularLocation>
        <location evidence="1">Chromosome</location>
    </subcellularLocation>
    <text evidence="1">Associated with non-pericentromeric regions of chromatin. Excluded from nucleoli and islands of condensed chromatin (By similarity).</text>
</comment>
<comment type="domain">
    <text evidence="1">In the pre-SET domain, Cys residues bind 3 zinc ions that are arranged in a triangular cluster; some of these Cys residues contribute to the binding of two zinc ions within the cluster.</text>
</comment>
<comment type="similarity">
    <text evidence="7">Belongs to the class V-like SAM-binding methyltransferase superfamily. Histone-lysine methyltransferase family. Suvar3-9 subfamily.</text>
</comment>
<comment type="sequence caution" evidence="9">
    <conflict type="frameshift">
        <sequence resource="EMBL-CDS" id="AAI24602"/>
    </conflict>
</comment>
<sequence length="1216" mass="135811">MEMELEPELEEELGVSLDELRKWIEEQVDSSEAVQKRKADLEQLQEWVEQREKEVADIDALCSNASESVVQCEALVKEVYSNMGLVYRESSSDDEGGKANPSEVIEIDDDDDDDVIAVGCLVPPKKSLTQAKDPALKEASAALQRTSQQVQNLAQTVNRTAQSGVTTPVKTGGPPGQGPLAVPAVFMSSAPRNTPTQPNPNIKQDSIKINMTLLGKKRTKTWHRGTLVAIKQVGNNLKYKVRFENKGKSLLSGNHVAFEYHPTLERLFVGARVVARYKDGNQVWLYAGVVAEMPNSKNRMRFLIFFDDGYASYVGLPELYPICRPLKKTWEDIEDASCRDFIEEYITSYPNRPMVLLKPGQIIKTEWEGTWWKSRVEEVDGSLVKMLFLDDKRSEWIYRGSTRLEPMFNLKMNTANSQEKKMAGQQRQRPNMGALRTKGPVVQYTSDNSAAASTGGGAATPGTPTRPVAPQPAGPPQPSRTESPSFKSQMAKKSTGQLALQPRQGMPSDLQPKPIINALQTNTSRLFLLQSGPVHTLTPITPAPQTVQTAISTYTNERVPQEPSYQAPNDRLFYLTHNCSPECLKRIRPTRPNLHRGRNPLLTPLLYEFRRMTGRRRLNRKMSFHVIYKSPCGLSLRNMTEIQRYLFQTQCDFIFLEMFCLDPYVLVDRRFQPQRPFYFIRDITSGREDIPLSCVNEIDNTPPPSVAYSKERIPEDGVYINTSADFLVGCDCTDGCRDKSKCSCHQLTLQATGCTPGGQINPNAGYHYKRLDECLPTGIYECNKRCRCNMQMCTNRLVQHGLQVRLQLFKTQNKGWGIRCLDDIAKGSFVCIYAGKILTDDFADKEGLEMGDEYFANLDHIESVENFKEGYESEAHCSDSEGSGVDMSRVKLPASSRHGKSNKMEERNSSTTGKSQDDSSEESDDEKDDDSNEDDSDSSDDTFVKDTYYTTSSVWRSYTTRRQAKGLKEESQDSKDGMSVSAGEDRKPPHMPEETGKSKVASWLTNQSSTSANQSVKVEGGIKTEKKDVMTLSDSDDVQTISSGSDDNKEREKKTQAVVKRQVAVKSTRGIALKSHSMMVKSGGGGAGGGGSGPSHGHGGGGGDNGPKNTRLFFDGEESCYIIDAKLEGNLGRYLNHSCSPNLFVQNVFVDTHDLRFPWVAFFASKRIRAGTELTWDYNYEVGSVEGKELLCCCGSTECRGRLLQIIKTEWEGTWW</sequence>
<gene>
    <name type="primary">setdb1b</name>
    <name type="ORF">zgc:152899</name>
</gene>
<reference key="1">
    <citation type="submission" date="2006-10" db="EMBL/GenBank/DDBJ databases">
        <authorList>
            <consortium name="NIH - Zebrafish Gene Collection (ZGC) project"/>
        </authorList>
    </citation>
    <scope>NUCLEOTIDE SEQUENCE [LARGE SCALE MRNA] OF 1-1204</scope>
    <source>
        <strain>AB</strain>
    </source>
</reference>
<reference key="2">
    <citation type="journal article" date="2004" name="Proc. Natl. Acad. Sci. U.S.A.">
        <title>Hematopoietic gene expression profile in zebrafish kidney marrow.</title>
        <authorList>
            <person name="Song H.-D."/>
            <person name="Sun X.-J."/>
            <person name="Deng M."/>
            <person name="Zhang G.-W."/>
            <person name="Zhou Y."/>
            <person name="Wu X.-Y."/>
            <person name="Sheng Y."/>
            <person name="Chen Y."/>
            <person name="Ruan Z."/>
            <person name="Jiang C.-L."/>
            <person name="Fan H.-Y."/>
            <person name="Zon L.I."/>
            <person name="Kanki J.P."/>
            <person name="Liu T.X."/>
            <person name="Look A.T."/>
            <person name="Chen Z."/>
        </authorList>
    </citation>
    <scope>NUCLEOTIDE SEQUENCE [LARGE SCALE MRNA] OF 373-1216</scope>
    <source>
        <tissue>Kidney marrow</tissue>
    </source>
</reference>
<accession>Q08BR4</accession>
<accession>Q06ZW4</accession>
<dbReference type="EC" id="2.1.1.354" evidence="2"/>
<dbReference type="EMBL" id="BC124601">
    <property type="protein sequence ID" value="AAI24602.1"/>
    <property type="status" value="ALT_FRAME"/>
    <property type="molecule type" value="mRNA"/>
</dbReference>
<dbReference type="EMBL" id="DQ358103">
    <property type="protein sequence ID" value="ABC88478.1"/>
    <property type="molecule type" value="mRNA"/>
</dbReference>
<dbReference type="SMR" id="Q08BR4"/>
<dbReference type="FunCoup" id="Q08BR4">
    <property type="interactions" value="2620"/>
</dbReference>
<dbReference type="STRING" id="7955.ENSDARP00000136505"/>
<dbReference type="PaxDb" id="7955-ENSDARP00000082796"/>
<dbReference type="AGR" id="ZFIN:ZDB-GENE-061013-224"/>
<dbReference type="ZFIN" id="ZDB-GENE-061013-224">
    <property type="gene designation" value="setdb1b"/>
</dbReference>
<dbReference type="eggNOG" id="KOG1141">
    <property type="taxonomic scope" value="Eukaryota"/>
</dbReference>
<dbReference type="InParanoid" id="Q08BR4"/>
<dbReference type="PhylomeDB" id="Q08BR4"/>
<dbReference type="Reactome" id="R-DRE-3214841">
    <property type="pathway name" value="PKMTs methylate histone lysines"/>
</dbReference>
<dbReference type="Reactome" id="R-DRE-9843940">
    <property type="pathway name" value="Regulation of endogenous retroelements by KRAB-ZFP proteins"/>
</dbReference>
<dbReference type="Reactome" id="R-DRE-9843970">
    <property type="pathway name" value="Regulation of endogenous retroelements by the Human Silencing Hub (HUSH) complex"/>
</dbReference>
<dbReference type="PRO" id="PR:Q08BR4"/>
<dbReference type="Proteomes" id="UP000000437">
    <property type="component" value="Unplaced"/>
</dbReference>
<dbReference type="GO" id="GO:0005694">
    <property type="term" value="C:chromosome"/>
    <property type="evidence" value="ECO:0007669"/>
    <property type="project" value="UniProtKB-SubCell"/>
</dbReference>
<dbReference type="GO" id="GO:0005634">
    <property type="term" value="C:nucleus"/>
    <property type="evidence" value="ECO:0000318"/>
    <property type="project" value="GO_Central"/>
</dbReference>
<dbReference type="GO" id="GO:0003677">
    <property type="term" value="F:DNA binding"/>
    <property type="evidence" value="ECO:0007669"/>
    <property type="project" value="InterPro"/>
</dbReference>
<dbReference type="GO" id="GO:0140999">
    <property type="term" value="F:histone H3K4 trimethyltransferase activity"/>
    <property type="evidence" value="ECO:0007669"/>
    <property type="project" value="UniProtKB-EC"/>
</dbReference>
<dbReference type="GO" id="GO:0046974">
    <property type="term" value="F:histone H3K9 methyltransferase activity"/>
    <property type="evidence" value="ECO:0000318"/>
    <property type="project" value="GO_Central"/>
</dbReference>
<dbReference type="GO" id="GO:1990841">
    <property type="term" value="F:promoter-specific chromatin binding"/>
    <property type="evidence" value="ECO:0000250"/>
    <property type="project" value="UniProtKB"/>
</dbReference>
<dbReference type="GO" id="GO:0008270">
    <property type="term" value="F:zinc ion binding"/>
    <property type="evidence" value="ECO:0007669"/>
    <property type="project" value="InterPro"/>
</dbReference>
<dbReference type="GO" id="GO:0006346">
    <property type="term" value="P:DNA methylation-dependent constitutive heterochromatin formation"/>
    <property type="evidence" value="ECO:0000250"/>
    <property type="project" value="UniProtKB"/>
</dbReference>
<dbReference type="GO" id="GO:0070828">
    <property type="term" value="P:heterochromatin organization"/>
    <property type="evidence" value="ECO:0000318"/>
    <property type="project" value="GO_Central"/>
</dbReference>
<dbReference type="GO" id="GO:0032259">
    <property type="term" value="P:methylation"/>
    <property type="evidence" value="ECO:0007669"/>
    <property type="project" value="UniProtKB-KW"/>
</dbReference>
<dbReference type="GO" id="GO:0010629">
    <property type="term" value="P:negative regulation of gene expression"/>
    <property type="evidence" value="ECO:0000318"/>
    <property type="project" value="GO_Central"/>
</dbReference>
<dbReference type="CDD" id="cd01395">
    <property type="entry name" value="HMT_MBD"/>
    <property type="match status" value="1"/>
</dbReference>
<dbReference type="CDD" id="cd10517">
    <property type="entry name" value="SET_SETDB1"/>
    <property type="match status" value="1"/>
</dbReference>
<dbReference type="CDD" id="cd20382">
    <property type="entry name" value="Tudor_SETDB1_rpt1"/>
    <property type="match status" value="1"/>
</dbReference>
<dbReference type="CDD" id="cd21181">
    <property type="entry name" value="Tudor_SETDB1_rpt2"/>
    <property type="match status" value="1"/>
</dbReference>
<dbReference type="FunFam" id="2.170.270.10:FF:000017">
    <property type="entry name" value="Histone-lysine N-methyltransferase"/>
    <property type="match status" value="1"/>
</dbReference>
<dbReference type="FunFam" id="2.170.270.10:FF:000020">
    <property type="entry name" value="Histone-lysine N-methyltransferase"/>
    <property type="match status" value="1"/>
</dbReference>
<dbReference type="FunFam" id="2.30.30.140:FF:000034">
    <property type="entry name" value="Histone-lysine N-methyltransferase"/>
    <property type="match status" value="1"/>
</dbReference>
<dbReference type="FunFam" id="2.30.30.140:FF:000037">
    <property type="entry name" value="Histone-lysine N-methyltransferase"/>
    <property type="match status" value="1"/>
</dbReference>
<dbReference type="Gene3D" id="2.30.30.140">
    <property type="match status" value="3"/>
</dbReference>
<dbReference type="Gene3D" id="2.170.270.10">
    <property type="entry name" value="SET domain"/>
    <property type="match status" value="2"/>
</dbReference>
<dbReference type="InterPro" id="IPR016177">
    <property type="entry name" value="DNA-bd_dom_sf"/>
</dbReference>
<dbReference type="InterPro" id="IPR040880">
    <property type="entry name" value="DUF5604"/>
</dbReference>
<dbReference type="InterPro" id="IPR025796">
    <property type="entry name" value="Hist-Lys_N-MeTrfase_SETDB1"/>
</dbReference>
<dbReference type="InterPro" id="IPR001739">
    <property type="entry name" value="Methyl_CpG_DNA-bd"/>
</dbReference>
<dbReference type="InterPro" id="IPR003616">
    <property type="entry name" value="Post-SET_dom"/>
</dbReference>
<dbReference type="InterPro" id="IPR007728">
    <property type="entry name" value="Pre-SET_dom"/>
</dbReference>
<dbReference type="InterPro" id="IPR001214">
    <property type="entry name" value="SET_dom"/>
</dbReference>
<dbReference type="InterPro" id="IPR046341">
    <property type="entry name" value="SET_dom_sf"/>
</dbReference>
<dbReference type="InterPro" id="IPR047232">
    <property type="entry name" value="SETDB1/2-like_MBD"/>
</dbReference>
<dbReference type="InterPro" id="IPR051516">
    <property type="entry name" value="SETDB_methyltransferase"/>
</dbReference>
<dbReference type="InterPro" id="IPR002999">
    <property type="entry name" value="Tudor"/>
</dbReference>
<dbReference type="InterPro" id="IPR041292">
    <property type="entry name" value="Tudor_4"/>
</dbReference>
<dbReference type="InterPro" id="IPR041291">
    <property type="entry name" value="TUDOR_5"/>
</dbReference>
<dbReference type="PANTHER" id="PTHR46024">
    <property type="entry name" value="HISTONE-LYSINE N-METHYLTRANSFERASE EGGLESS"/>
    <property type="match status" value="1"/>
</dbReference>
<dbReference type="PANTHER" id="PTHR46024:SF2">
    <property type="entry name" value="HISTONE-LYSINE N-METHYLTRANSFERASE SETDB1"/>
    <property type="match status" value="1"/>
</dbReference>
<dbReference type="Pfam" id="PF18300">
    <property type="entry name" value="DUF5604"/>
    <property type="match status" value="1"/>
</dbReference>
<dbReference type="Pfam" id="PF01429">
    <property type="entry name" value="MBD"/>
    <property type="match status" value="1"/>
</dbReference>
<dbReference type="Pfam" id="PF05033">
    <property type="entry name" value="Pre-SET"/>
    <property type="match status" value="1"/>
</dbReference>
<dbReference type="Pfam" id="PF00856">
    <property type="entry name" value="SET"/>
    <property type="match status" value="1"/>
</dbReference>
<dbReference type="Pfam" id="PF18358">
    <property type="entry name" value="Tudor_4"/>
    <property type="match status" value="1"/>
</dbReference>
<dbReference type="Pfam" id="PF18359">
    <property type="entry name" value="Tudor_5"/>
    <property type="match status" value="1"/>
</dbReference>
<dbReference type="SMART" id="SM00391">
    <property type="entry name" value="MBD"/>
    <property type="match status" value="1"/>
</dbReference>
<dbReference type="SMART" id="SM00468">
    <property type="entry name" value="PreSET"/>
    <property type="match status" value="1"/>
</dbReference>
<dbReference type="SMART" id="SM00317">
    <property type="entry name" value="SET"/>
    <property type="match status" value="1"/>
</dbReference>
<dbReference type="SMART" id="SM00333">
    <property type="entry name" value="TUDOR"/>
    <property type="match status" value="2"/>
</dbReference>
<dbReference type="SUPFAM" id="SSF54171">
    <property type="entry name" value="DNA-binding domain"/>
    <property type="match status" value="1"/>
</dbReference>
<dbReference type="SUPFAM" id="SSF82199">
    <property type="entry name" value="SET domain"/>
    <property type="match status" value="1"/>
</dbReference>
<dbReference type="PROSITE" id="PS50868">
    <property type="entry name" value="POST_SET"/>
    <property type="match status" value="1"/>
</dbReference>
<dbReference type="PROSITE" id="PS50867">
    <property type="entry name" value="PRE_SET"/>
    <property type="match status" value="1"/>
</dbReference>
<dbReference type="PROSITE" id="PS51573">
    <property type="entry name" value="SAM_MT43_SUVAR39_1"/>
    <property type="match status" value="1"/>
</dbReference>
<dbReference type="PROSITE" id="PS50280">
    <property type="entry name" value="SET"/>
    <property type="match status" value="1"/>
</dbReference>
<name>STB1B_DANRE</name>
<feature type="chain" id="PRO_0000281820" description="Histone-lysine N-methyltransferase SETDB1-B">
    <location>
        <begin position="1"/>
        <end position="1216"/>
    </location>
</feature>
<feature type="domain" description="Tudor 1">
    <location>
        <begin position="266"/>
        <end position="329"/>
    </location>
</feature>
<feature type="domain" description="Tudor 2">
    <location>
        <begin position="356"/>
        <end position="412"/>
    </location>
</feature>
<feature type="domain" description="MBD">
    <location>
        <begin position="595"/>
        <end position="666"/>
    </location>
</feature>
<feature type="domain" description="Pre-SET" evidence="5">
    <location>
        <begin position="728"/>
        <end position="801"/>
    </location>
</feature>
<feature type="domain" description="SET" evidence="6">
    <location>
        <begin position="804"/>
        <end position="1179"/>
    </location>
</feature>
<feature type="domain" description="Post-SET" evidence="4">
    <location>
        <begin position="1188"/>
        <end position="1204"/>
    </location>
</feature>
<feature type="region of interest" description="Disordered" evidence="8">
    <location>
        <begin position="417"/>
        <end position="513"/>
    </location>
</feature>
<feature type="region of interest" description="Disordered" evidence="8">
    <location>
        <begin position="892"/>
        <end position="944"/>
    </location>
</feature>
<feature type="region of interest" description="Disordered" evidence="8">
    <location>
        <begin position="961"/>
        <end position="1057"/>
    </location>
</feature>
<feature type="region of interest" description="Disordered" evidence="8">
    <location>
        <begin position="1081"/>
        <end position="1108"/>
    </location>
</feature>
<feature type="coiled-coil region" evidence="3">
    <location>
        <begin position="38"/>
        <end position="61"/>
    </location>
</feature>
<feature type="compositionally biased region" description="Pro residues" evidence="8">
    <location>
        <begin position="467"/>
        <end position="478"/>
    </location>
</feature>
<feature type="compositionally biased region" description="Polar residues" evidence="8">
    <location>
        <begin position="482"/>
        <end position="498"/>
    </location>
</feature>
<feature type="compositionally biased region" description="Acidic residues" evidence="8">
    <location>
        <begin position="918"/>
        <end position="940"/>
    </location>
</feature>
<feature type="compositionally biased region" description="Basic and acidic residues" evidence="8">
    <location>
        <begin position="966"/>
        <end position="976"/>
    </location>
</feature>
<feature type="compositionally biased region" description="Basic and acidic residues" evidence="8">
    <location>
        <begin position="983"/>
        <end position="997"/>
    </location>
</feature>
<feature type="compositionally biased region" description="Polar residues" evidence="8">
    <location>
        <begin position="1003"/>
        <end position="1016"/>
    </location>
</feature>
<feature type="compositionally biased region" description="Basic and acidic residues" evidence="8">
    <location>
        <begin position="1020"/>
        <end position="1029"/>
    </location>
</feature>
<feature type="compositionally biased region" description="Basic and acidic residues" evidence="8">
    <location>
        <begin position="1046"/>
        <end position="1055"/>
    </location>
</feature>
<feature type="compositionally biased region" description="Gly residues" evidence="8">
    <location>
        <begin position="1082"/>
        <end position="1105"/>
    </location>
</feature>
<feature type="binding site" evidence="1">
    <location>
        <position position="730"/>
    </location>
    <ligand>
        <name>Zn(2+)</name>
        <dbReference type="ChEBI" id="CHEBI:29105"/>
        <label>1</label>
    </ligand>
</feature>
<feature type="binding site" evidence="1">
    <location>
        <position position="730"/>
    </location>
    <ligand>
        <name>Zn(2+)</name>
        <dbReference type="ChEBI" id="CHEBI:29105"/>
        <label>2</label>
    </ligand>
</feature>
<feature type="binding site" evidence="1">
    <location>
        <position position="732"/>
    </location>
    <ligand>
        <name>Zn(2+)</name>
        <dbReference type="ChEBI" id="CHEBI:29105"/>
        <label>1</label>
    </ligand>
</feature>
<feature type="binding site" evidence="1">
    <location>
        <position position="736"/>
    </location>
    <ligand>
        <name>Zn(2+)</name>
        <dbReference type="ChEBI" id="CHEBI:29105"/>
        <label>1</label>
    </ligand>
</feature>
<feature type="binding site" evidence="1">
    <location>
        <position position="736"/>
    </location>
    <ligand>
        <name>Zn(2+)</name>
        <dbReference type="ChEBI" id="CHEBI:29105"/>
        <label>3</label>
    </ligand>
</feature>
<feature type="binding site" evidence="1">
    <location>
        <position position="742"/>
    </location>
    <ligand>
        <name>Zn(2+)</name>
        <dbReference type="ChEBI" id="CHEBI:29105"/>
        <label>1</label>
    </ligand>
</feature>
<feature type="binding site" evidence="1">
    <location>
        <position position="744"/>
    </location>
    <ligand>
        <name>Zn(2+)</name>
        <dbReference type="ChEBI" id="CHEBI:29105"/>
        <label>2</label>
    </ligand>
</feature>
<feature type="binding site" evidence="1">
    <location>
        <position position="782"/>
    </location>
    <ligand>
        <name>Zn(2+)</name>
        <dbReference type="ChEBI" id="CHEBI:29105"/>
        <label>2</label>
    </ligand>
</feature>
<feature type="binding site" evidence="1">
    <location>
        <position position="782"/>
    </location>
    <ligand>
        <name>Zn(2+)</name>
        <dbReference type="ChEBI" id="CHEBI:29105"/>
        <label>3</label>
    </ligand>
</feature>
<feature type="binding site" evidence="1">
    <location>
        <position position="786"/>
    </location>
    <ligand>
        <name>Zn(2+)</name>
        <dbReference type="ChEBI" id="CHEBI:29105"/>
        <label>2</label>
    </ligand>
</feature>
<feature type="binding site" evidence="1">
    <location>
        <position position="788"/>
    </location>
    <ligand>
        <name>Zn(2+)</name>
        <dbReference type="ChEBI" id="CHEBI:29105"/>
        <label>3</label>
    </ligand>
</feature>
<feature type="binding site" evidence="1">
    <location>
        <position position="793"/>
    </location>
    <ligand>
        <name>Zn(2+)</name>
        <dbReference type="ChEBI" id="CHEBI:29105"/>
        <label>3</label>
    </ligand>
</feature>
<feature type="binding site" evidence="1">
    <location>
        <begin position="814"/>
        <end position="816"/>
    </location>
    <ligand>
        <name>S-adenosyl-L-methionine</name>
        <dbReference type="ChEBI" id="CHEBI:59789"/>
    </ligand>
</feature>
<feature type="binding site" evidence="6">
    <location>
        <position position="852"/>
    </location>
    <ligand>
        <name>S-adenosyl-L-methionine</name>
        <dbReference type="ChEBI" id="CHEBI:59789"/>
    </ligand>
</feature>
<feature type="binding site" evidence="6">
    <location>
        <position position="854"/>
    </location>
    <ligand>
        <name>S-adenosyl-L-methionine</name>
        <dbReference type="ChEBI" id="CHEBI:59789"/>
    </ligand>
</feature>
<feature type="binding site" evidence="6">
    <location>
        <position position="1133"/>
    </location>
    <ligand>
        <name>S-adenosyl-L-methionine</name>
        <dbReference type="ChEBI" id="CHEBI:59789"/>
    </ligand>
</feature>
<feature type="binding site" evidence="1">
    <location>
        <begin position="1136"/>
        <end position="1137"/>
    </location>
    <ligand>
        <name>S-adenosyl-L-methionine</name>
        <dbReference type="ChEBI" id="CHEBI:59789"/>
    </ligand>
</feature>
<feature type="binding site" evidence="1">
    <location>
        <position position="1139"/>
    </location>
    <ligand>
        <name>Zn(2+)</name>
        <dbReference type="ChEBI" id="CHEBI:29105"/>
        <label>4</label>
    </ligand>
</feature>
<feature type="binding site" evidence="1">
    <location>
        <position position="1192"/>
    </location>
    <ligand>
        <name>Zn(2+)</name>
        <dbReference type="ChEBI" id="CHEBI:29105"/>
        <label>4</label>
    </ligand>
</feature>
<feature type="binding site" evidence="1">
    <location>
        <position position="1194"/>
    </location>
    <ligand>
        <name>Zn(2+)</name>
        <dbReference type="ChEBI" id="CHEBI:29105"/>
        <label>4</label>
    </ligand>
</feature>
<feature type="binding site" evidence="1">
    <location>
        <position position="1199"/>
    </location>
    <ligand>
        <name>Zn(2+)</name>
        <dbReference type="ChEBI" id="CHEBI:29105"/>
        <label>4</label>
    </ligand>
</feature>
<organism>
    <name type="scientific">Danio rerio</name>
    <name type="common">Zebrafish</name>
    <name type="synonym">Brachydanio rerio</name>
    <dbReference type="NCBI Taxonomy" id="7955"/>
    <lineage>
        <taxon>Eukaryota</taxon>
        <taxon>Metazoa</taxon>
        <taxon>Chordata</taxon>
        <taxon>Craniata</taxon>
        <taxon>Vertebrata</taxon>
        <taxon>Euteleostomi</taxon>
        <taxon>Actinopterygii</taxon>
        <taxon>Neopterygii</taxon>
        <taxon>Teleostei</taxon>
        <taxon>Ostariophysi</taxon>
        <taxon>Cypriniformes</taxon>
        <taxon>Danionidae</taxon>
        <taxon>Danioninae</taxon>
        <taxon>Danio</taxon>
    </lineage>
</organism>
<keyword id="KW-0156">Chromatin regulator</keyword>
<keyword id="KW-0158">Chromosome</keyword>
<keyword id="KW-0175">Coiled coil</keyword>
<keyword id="KW-0479">Metal-binding</keyword>
<keyword id="KW-0489">Methyltransferase</keyword>
<keyword id="KW-0539">Nucleus</keyword>
<keyword id="KW-1185">Reference proteome</keyword>
<keyword id="KW-0677">Repeat</keyword>
<keyword id="KW-0678">Repressor</keyword>
<keyword id="KW-0949">S-adenosyl-L-methionine</keyword>
<keyword id="KW-0804">Transcription</keyword>
<keyword id="KW-0805">Transcription regulation</keyword>
<keyword id="KW-0808">Transferase</keyword>
<keyword id="KW-0862">Zinc</keyword>
<protein>
    <recommendedName>
        <fullName>Histone-lysine N-methyltransferase SETDB1-B</fullName>
        <ecNumber evidence="2">2.1.1.354</ecNumber>
    </recommendedName>
    <alternativeName>
        <fullName>SET domain bifurcated 1B</fullName>
    </alternativeName>
</protein>
<proteinExistence type="evidence at transcript level"/>
<evidence type="ECO:0000250" key="1"/>
<evidence type="ECO:0000250" key="2">
    <source>
        <dbReference type="UniProtKB" id="Q15047"/>
    </source>
</evidence>
<evidence type="ECO:0000255" key="3"/>
<evidence type="ECO:0000255" key="4">
    <source>
        <dbReference type="PROSITE-ProRule" id="PRU00155"/>
    </source>
</evidence>
<evidence type="ECO:0000255" key="5">
    <source>
        <dbReference type="PROSITE-ProRule" id="PRU00157"/>
    </source>
</evidence>
<evidence type="ECO:0000255" key="6">
    <source>
        <dbReference type="PROSITE-ProRule" id="PRU00190"/>
    </source>
</evidence>
<evidence type="ECO:0000255" key="7">
    <source>
        <dbReference type="PROSITE-ProRule" id="PRU00906"/>
    </source>
</evidence>
<evidence type="ECO:0000256" key="8">
    <source>
        <dbReference type="SAM" id="MobiDB-lite"/>
    </source>
</evidence>
<evidence type="ECO:0000305" key="9"/>